<feature type="signal peptide">
    <location>
        <begin position="1"/>
        <end position="27"/>
    </location>
</feature>
<feature type="chain" id="PRO_0000018998" description="H-2 class II histocompatibility antigen, A-S beta chain">
    <location>
        <begin position="28"/>
        <end position="263"/>
    </location>
</feature>
<feature type="topological domain" description="Extracellular" evidence="1">
    <location>
        <begin position="28"/>
        <end position="224"/>
    </location>
</feature>
<feature type="transmembrane region" description="Helical" evidence="1">
    <location>
        <begin position="225"/>
        <end position="245"/>
    </location>
</feature>
<feature type="topological domain" description="Cytoplasmic" evidence="1">
    <location>
        <begin position="246"/>
        <end position="263"/>
    </location>
</feature>
<feature type="domain" description="Ig-like C1-type">
    <location>
        <begin position="123"/>
        <end position="211"/>
    </location>
</feature>
<feature type="region of interest" description="Beta-1">
    <location>
        <begin position="28"/>
        <end position="120"/>
    </location>
</feature>
<feature type="region of interest" description="Beta-2">
    <location>
        <begin position="121"/>
        <end position="214"/>
    </location>
</feature>
<feature type="region of interest" description="Connecting peptide">
    <location>
        <begin position="215"/>
        <end position="224"/>
    </location>
</feature>
<feature type="glycosylation site" description="N-linked (GlcNAc...) asparagine" evidence="1">
    <location>
        <position position="46"/>
    </location>
</feature>
<feature type="disulfide bond" evidence="2">
    <location>
        <begin position="42"/>
        <end position="104"/>
    </location>
</feature>
<feature type="disulfide bond" evidence="2">
    <location>
        <begin position="143"/>
        <end position="199"/>
    </location>
</feature>
<accession>P06345</accession>
<comment type="subcellular location">
    <subcellularLocation>
        <location evidence="5">Membrane</location>
        <topology evidence="5">Single-pass type I membrane protein</topology>
    </subcellularLocation>
</comment>
<comment type="PTM">
    <text evidence="3 4">Ubiquitinated in immature dendritic cells leading to down-regulation of MHC class II.</text>
</comment>
<comment type="similarity">
    <text evidence="5">Belongs to the MHC class II family.</text>
</comment>
<protein>
    <recommendedName>
        <fullName>H-2 class II histocompatibility antigen, A-S beta chain</fullName>
    </recommendedName>
</protein>
<gene>
    <name type="primary">H2-Ab1</name>
</gene>
<dbReference type="EMBL" id="M13540">
    <property type="protein sequence ID" value="AAA39634.1"/>
    <property type="molecule type" value="mRNA"/>
</dbReference>
<dbReference type="PIR" id="A02240">
    <property type="entry name" value="HLMSBS"/>
</dbReference>
<dbReference type="SMR" id="P06345"/>
<dbReference type="GlyCosmos" id="P06345">
    <property type="glycosylation" value="1 site, No reported glycans"/>
</dbReference>
<dbReference type="PhosphoSitePlus" id="P06345"/>
<dbReference type="jPOST" id="P06345"/>
<dbReference type="PeptideAtlas" id="P06345"/>
<dbReference type="ProteomicsDB" id="270894"/>
<dbReference type="AGR" id="MGI:103070"/>
<dbReference type="MGI" id="MGI:103070">
    <property type="gene designation" value="H2-Ab1"/>
</dbReference>
<dbReference type="OrthoDB" id="10043043at2759"/>
<dbReference type="ChiTaRS" id="H2-Ab1">
    <property type="organism name" value="mouse"/>
</dbReference>
<dbReference type="Proteomes" id="UP000000589">
    <property type="component" value="Unplaced"/>
</dbReference>
<dbReference type="GO" id="GO:0005769">
    <property type="term" value="C:early endosome"/>
    <property type="evidence" value="ECO:0000314"/>
    <property type="project" value="MGI"/>
</dbReference>
<dbReference type="GO" id="GO:0009897">
    <property type="term" value="C:external side of plasma membrane"/>
    <property type="evidence" value="ECO:0000314"/>
    <property type="project" value="MGI"/>
</dbReference>
<dbReference type="GO" id="GO:0005794">
    <property type="term" value="C:Golgi apparatus"/>
    <property type="evidence" value="ECO:0000314"/>
    <property type="project" value="MGI"/>
</dbReference>
<dbReference type="GO" id="GO:0016020">
    <property type="term" value="C:membrane"/>
    <property type="evidence" value="ECO:0000314"/>
    <property type="project" value="MGI"/>
</dbReference>
<dbReference type="GO" id="GO:0042613">
    <property type="term" value="C:MHC class II protein complex"/>
    <property type="evidence" value="ECO:0000314"/>
    <property type="project" value="MGI"/>
</dbReference>
<dbReference type="GO" id="GO:0005771">
    <property type="term" value="C:multivesicular body"/>
    <property type="evidence" value="ECO:0000314"/>
    <property type="project" value="MGI"/>
</dbReference>
<dbReference type="GO" id="GO:0005886">
    <property type="term" value="C:plasma membrane"/>
    <property type="evidence" value="ECO:0000314"/>
    <property type="project" value="MGI"/>
</dbReference>
<dbReference type="GO" id="GO:0042605">
    <property type="term" value="F:peptide antigen binding"/>
    <property type="evidence" value="ECO:0000314"/>
    <property type="project" value="MGI"/>
</dbReference>
<dbReference type="GO" id="GO:0002250">
    <property type="term" value="P:adaptive immune response"/>
    <property type="evidence" value="ECO:0007669"/>
    <property type="project" value="UniProtKB-KW"/>
</dbReference>
<dbReference type="GO" id="GO:0019882">
    <property type="term" value="P:antigen processing and presentation"/>
    <property type="evidence" value="ECO:0000314"/>
    <property type="project" value="MGI"/>
</dbReference>
<dbReference type="GO" id="GO:0019886">
    <property type="term" value="P:antigen processing and presentation of exogenous peptide antigen via MHC class II"/>
    <property type="evidence" value="ECO:0000314"/>
    <property type="project" value="MGI"/>
</dbReference>
<dbReference type="GO" id="GO:0048002">
    <property type="term" value="P:antigen processing and presentation of peptide antigen"/>
    <property type="evidence" value="ECO:0000314"/>
    <property type="project" value="MGI"/>
</dbReference>
<dbReference type="GO" id="GO:0006955">
    <property type="term" value="P:immune response"/>
    <property type="evidence" value="ECO:0000315"/>
    <property type="project" value="MGI"/>
</dbReference>
<dbReference type="CDD" id="cd21001">
    <property type="entry name" value="IgC1_MHC_II_beta_HLA-DQ_I-A"/>
    <property type="match status" value="1"/>
</dbReference>
<dbReference type="FunFam" id="2.60.40.10:FF:000116">
    <property type="entry name" value="HLA class II histocompatibility antigen, DRB1-1 beta chain"/>
    <property type="match status" value="1"/>
</dbReference>
<dbReference type="FunFam" id="3.10.320.10:FF:000001">
    <property type="entry name" value="HLA class II histocompatibility antigen, DRB1-1 beta chain"/>
    <property type="match status" value="1"/>
</dbReference>
<dbReference type="Gene3D" id="3.10.320.10">
    <property type="entry name" value="Class II Histocompatibility Antigen, M Beta Chain, Chain B, domain 1"/>
    <property type="match status" value="1"/>
</dbReference>
<dbReference type="Gene3D" id="2.60.40.10">
    <property type="entry name" value="Immunoglobulins"/>
    <property type="match status" value="1"/>
</dbReference>
<dbReference type="InterPro" id="IPR007110">
    <property type="entry name" value="Ig-like_dom"/>
</dbReference>
<dbReference type="InterPro" id="IPR036179">
    <property type="entry name" value="Ig-like_dom_sf"/>
</dbReference>
<dbReference type="InterPro" id="IPR013783">
    <property type="entry name" value="Ig-like_fold"/>
</dbReference>
<dbReference type="InterPro" id="IPR003006">
    <property type="entry name" value="Ig/MHC_CS"/>
</dbReference>
<dbReference type="InterPro" id="IPR003597">
    <property type="entry name" value="Ig_C1-set"/>
</dbReference>
<dbReference type="InterPro" id="IPR050160">
    <property type="entry name" value="MHC/Immunoglobulin"/>
</dbReference>
<dbReference type="InterPro" id="IPR011162">
    <property type="entry name" value="MHC_I/II-like_Ag-recog"/>
</dbReference>
<dbReference type="InterPro" id="IPR014745">
    <property type="entry name" value="MHC_II_a/b_N"/>
</dbReference>
<dbReference type="InterPro" id="IPR000353">
    <property type="entry name" value="MHC_II_b_N"/>
</dbReference>
<dbReference type="PANTHER" id="PTHR19944:SF101">
    <property type="entry name" value="HLA CLASS II HISTOCOMPATIBILITY ANTIGEN, DQ BETA 1 CHAIN"/>
    <property type="match status" value="1"/>
</dbReference>
<dbReference type="PANTHER" id="PTHR19944">
    <property type="entry name" value="MHC CLASS II-RELATED"/>
    <property type="match status" value="1"/>
</dbReference>
<dbReference type="Pfam" id="PF07654">
    <property type="entry name" value="C1-set"/>
    <property type="match status" value="1"/>
</dbReference>
<dbReference type="Pfam" id="PF00969">
    <property type="entry name" value="MHC_II_beta"/>
    <property type="match status" value="1"/>
</dbReference>
<dbReference type="SMART" id="SM00407">
    <property type="entry name" value="IGc1"/>
    <property type="match status" value="1"/>
</dbReference>
<dbReference type="SMART" id="SM00921">
    <property type="entry name" value="MHC_II_beta"/>
    <property type="match status" value="1"/>
</dbReference>
<dbReference type="SUPFAM" id="SSF48726">
    <property type="entry name" value="Immunoglobulin"/>
    <property type="match status" value="1"/>
</dbReference>
<dbReference type="SUPFAM" id="SSF54452">
    <property type="entry name" value="MHC antigen-recognition domain"/>
    <property type="match status" value="1"/>
</dbReference>
<dbReference type="PROSITE" id="PS50835">
    <property type="entry name" value="IG_LIKE"/>
    <property type="match status" value="1"/>
</dbReference>
<dbReference type="PROSITE" id="PS00290">
    <property type="entry name" value="IG_MHC"/>
    <property type="match status" value="1"/>
</dbReference>
<organism>
    <name type="scientific">Mus musculus</name>
    <name type="common">Mouse</name>
    <dbReference type="NCBI Taxonomy" id="10090"/>
    <lineage>
        <taxon>Eukaryota</taxon>
        <taxon>Metazoa</taxon>
        <taxon>Chordata</taxon>
        <taxon>Craniata</taxon>
        <taxon>Vertebrata</taxon>
        <taxon>Euteleostomi</taxon>
        <taxon>Mammalia</taxon>
        <taxon>Eutheria</taxon>
        <taxon>Euarchontoglires</taxon>
        <taxon>Glires</taxon>
        <taxon>Rodentia</taxon>
        <taxon>Myomorpha</taxon>
        <taxon>Muroidea</taxon>
        <taxon>Muridae</taxon>
        <taxon>Murinae</taxon>
        <taxon>Mus</taxon>
        <taxon>Mus</taxon>
    </lineage>
</organism>
<evidence type="ECO:0000255" key="1"/>
<evidence type="ECO:0000255" key="2">
    <source>
        <dbReference type="PROSITE-ProRule" id="PRU00114"/>
    </source>
</evidence>
<evidence type="ECO:0000269" key="3">
    <source>
    </source>
</evidence>
<evidence type="ECO:0000269" key="4">
    <source>
    </source>
</evidence>
<evidence type="ECO:0000305" key="5"/>
<proteinExistence type="evidence at protein level"/>
<sequence>MALQIPSLLLSAAVVVLMVLSSPGTEGGDSERHFVFQFKGECYFTNGTQRIRSVDRYIYNREEYLRFDSDVGEYRAVTELGRPDAEYYNKQYLEQTRAELDTVCRHNYEGVETHTSLRRLEQPNVVISLSRTEALNHHNTLVCSVTDFYPAKIKVRWFRNGQEETVGVSSTQLISNGDWTFQVLVMLEMTPRRGEVYTCHVEHPSLKSPITVEWRAQSESARSKMLSGIGGCVLGVIFLGLGLFIRHRSQKGPRGPPPAGLLQ</sequence>
<keyword id="KW-1064">Adaptive immunity</keyword>
<keyword id="KW-1015">Disulfide bond</keyword>
<keyword id="KW-0325">Glycoprotein</keyword>
<keyword id="KW-0391">Immunity</keyword>
<keyword id="KW-0472">Membrane</keyword>
<keyword id="KW-0491">MHC II</keyword>
<keyword id="KW-1185">Reference proteome</keyword>
<keyword id="KW-0732">Signal</keyword>
<keyword id="KW-0812">Transmembrane</keyword>
<keyword id="KW-1133">Transmembrane helix</keyword>
<keyword id="KW-0832">Ubl conjugation</keyword>
<reference key="1">
    <citation type="journal article" date="1986" name="Proc. Natl. Acad. Sci. U.S.A.">
        <title>Sequence analysis and structure-function correlations of murine q, k, u, s, and f haplotype I-A beta cDNA clones.</title>
        <authorList>
            <person name="Estess P."/>
            <person name="Begovich A.B."/>
            <person name="Koo M."/>
            <person name="Jones P.P."/>
            <person name="McDevitt H.O."/>
        </authorList>
    </citation>
    <scope>NUCLEOTIDE SEQUENCE [MRNA]</scope>
</reference>
<reference key="2">
    <citation type="journal article" date="2006" name="Immunity">
        <title>Dendritic cells regulate exposure of MHC class II at their plasma membrane by oligoubiquitination.</title>
        <authorList>
            <person name="van Niel G."/>
            <person name="Wubbolts R."/>
            <person name="Ten Broeke T."/>
            <person name="Buschow S.I."/>
            <person name="Ossendorp F.A."/>
            <person name="Melief C.J."/>
            <person name="Raposo G."/>
            <person name="van Balkom B.W."/>
            <person name="Stoorvogel W."/>
        </authorList>
    </citation>
    <scope>UBIQUITINATION</scope>
</reference>
<reference key="3">
    <citation type="journal article" date="2006" name="Nature">
        <title>Surface expression of MHC class II in dendritic cells is controlled by regulated ubiquitination.</title>
        <authorList>
            <person name="Shin J.S."/>
            <person name="Ebersold M."/>
            <person name="Pypaert M."/>
            <person name="Delamarre L."/>
            <person name="Hartley A."/>
            <person name="Mellman I."/>
        </authorList>
    </citation>
    <scope>UBIQUITINATION</scope>
</reference>
<reference key="4">
    <citation type="journal article" date="2010" name="Cell">
        <title>A tissue-specific atlas of mouse protein phosphorylation and expression.</title>
        <authorList>
            <person name="Huttlin E.L."/>
            <person name="Jedrychowski M.P."/>
            <person name="Elias J.E."/>
            <person name="Goswami T."/>
            <person name="Rad R."/>
            <person name="Beausoleil S.A."/>
            <person name="Villen J."/>
            <person name="Haas W."/>
            <person name="Sowa M.E."/>
            <person name="Gygi S.P."/>
        </authorList>
    </citation>
    <scope>IDENTIFICATION BY MASS SPECTROMETRY [LARGE SCALE ANALYSIS]</scope>
    <source>
        <tissue>Lung</tissue>
        <tissue>Spleen</tissue>
    </source>
</reference>
<name>HB2S_MOUSE</name>